<feature type="chain" id="PRO_1000124920" description="GTP cyclohydrolase 1">
    <location>
        <begin position="1"/>
        <end position="182"/>
    </location>
</feature>
<feature type="binding site" evidence="1">
    <location>
        <position position="73"/>
    </location>
    <ligand>
        <name>Zn(2+)</name>
        <dbReference type="ChEBI" id="CHEBI:29105"/>
    </ligand>
</feature>
<feature type="binding site" evidence="1">
    <location>
        <position position="76"/>
    </location>
    <ligand>
        <name>Zn(2+)</name>
        <dbReference type="ChEBI" id="CHEBI:29105"/>
    </ligand>
</feature>
<feature type="binding site" evidence="1">
    <location>
        <position position="144"/>
    </location>
    <ligand>
        <name>Zn(2+)</name>
        <dbReference type="ChEBI" id="CHEBI:29105"/>
    </ligand>
</feature>
<organism>
    <name type="scientific">Hydrogenobaculum sp. (strain Y04AAS1)</name>
    <dbReference type="NCBI Taxonomy" id="380749"/>
    <lineage>
        <taxon>Bacteria</taxon>
        <taxon>Pseudomonadati</taxon>
        <taxon>Aquificota</taxon>
        <taxon>Aquificia</taxon>
        <taxon>Aquificales</taxon>
        <taxon>Aquificaceae</taxon>
        <taxon>Hydrogenobaculum</taxon>
    </lineage>
</organism>
<proteinExistence type="inferred from homology"/>
<gene>
    <name evidence="1" type="primary">folE</name>
    <name type="ordered locus">HY04AAS1_0018</name>
</gene>
<evidence type="ECO:0000255" key="1">
    <source>
        <dbReference type="HAMAP-Rule" id="MF_00223"/>
    </source>
</evidence>
<name>GCH1_HYDS0</name>
<reference key="1">
    <citation type="journal article" date="2009" name="J. Bacteriol.">
        <title>Complete and draft genome sequences of six members of the Aquificales.</title>
        <authorList>
            <person name="Reysenbach A.-L."/>
            <person name="Hamamura N."/>
            <person name="Podar M."/>
            <person name="Griffiths E."/>
            <person name="Ferreira S."/>
            <person name="Hochstein R."/>
            <person name="Heidelberg J."/>
            <person name="Johnson J."/>
            <person name="Mead D."/>
            <person name="Pohorille A."/>
            <person name="Sarmiento M."/>
            <person name="Schweighofer K."/>
            <person name="Seshadri R."/>
            <person name="Voytek M.A."/>
        </authorList>
    </citation>
    <scope>NUCLEOTIDE SEQUENCE [LARGE SCALE GENOMIC DNA]</scope>
    <source>
        <strain>Y04AAS1</strain>
    </source>
</reference>
<dbReference type="EC" id="3.5.4.16" evidence="1"/>
<dbReference type="EMBL" id="CP001130">
    <property type="protein sequence ID" value="ACG56710.1"/>
    <property type="molecule type" value="Genomic_DNA"/>
</dbReference>
<dbReference type="RefSeq" id="WP_012513067.1">
    <property type="nucleotide sequence ID" value="NC_011126.1"/>
</dbReference>
<dbReference type="SMR" id="B4U640"/>
<dbReference type="STRING" id="380749.HY04AAS1_0018"/>
<dbReference type="KEGG" id="hya:HY04AAS1_0018"/>
<dbReference type="eggNOG" id="COG0302">
    <property type="taxonomic scope" value="Bacteria"/>
</dbReference>
<dbReference type="HOGENOM" id="CLU_049768_3_1_0"/>
<dbReference type="OrthoDB" id="9801207at2"/>
<dbReference type="UniPathway" id="UPA00848">
    <property type="reaction ID" value="UER00151"/>
</dbReference>
<dbReference type="GO" id="GO:0005737">
    <property type="term" value="C:cytoplasm"/>
    <property type="evidence" value="ECO:0007669"/>
    <property type="project" value="TreeGrafter"/>
</dbReference>
<dbReference type="GO" id="GO:0005525">
    <property type="term" value="F:GTP binding"/>
    <property type="evidence" value="ECO:0007669"/>
    <property type="project" value="UniProtKB-KW"/>
</dbReference>
<dbReference type="GO" id="GO:0003934">
    <property type="term" value="F:GTP cyclohydrolase I activity"/>
    <property type="evidence" value="ECO:0007669"/>
    <property type="project" value="UniProtKB-UniRule"/>
</dbReference>
<dbReference type="GO" id="GO:0008270">
    <property type="term" value="F:zinc ion binding"/>
    <property type="evidence" value="ECO:0007669"/>
    <property type="project" value="UniProtKB-UniRule"/>
</dbReference>
<dbReference type="GO" id="GO:0006730">
    <property type="term" value="P:one-carbon metabolic process"/>
    <property type="evidence" value="ECO:0007669"/>
    <property type="project" value="UniProtKB-UniRule"/>
</dbReference>
<dbReference type="GO" id="GO:0006729">
    <property type="term" value="P:tetrahydrobiopterin biosynthetic process"/>
    <property type="evidence" value="ECO:0007669"/>
    <property type="project" value="TreeGrafter"/>
</dbReference>
<dbReference type="GO" id="GO:0046654">
    <property type="term" value="P:tetrahydrofolate biosynthetic process"/>
    <property type="evidence" value="ECO:0007669"/>
    <property type="project" value="UniProtKB-UniRule"/>
</dbReference>
<dbReference type="FunFam" id="3.30.1130.10:FF:000001">
    <property type="entry name" value="GTP cyclohydrolase 1"/>
    <property type="match status" value="1"/>
</dbReference>
<dbReference type="Gene3D" id="1.10.286.10">
    <property type="match status" value="1"/>
</dbReference>
<dbReference type="Gene3D" id="3.30.1130.10">
    <property type="match status" value="1"/>
</dbReference>
<dbReference type="HAMAP" id="MF_00223">
    <property type="entry name" value="FolE"/>
    <property type="match status" value="1"/>
</dbReference>
<dbReference type="InterPro" id="IPR043133">
    <property type="entry name" value="GTP-CH-I_C/QueF"/>
</dbReference>
<dbReference type="InterPro" id="IPR043134">
    <property type="entry name" value="GTP-CH-I_N"/>
</dbReference>
<dbReference type="InterPro" id="IPR001474">
    <property type="entry name" value="GTP_CycHdrlase_I"/>
</dbReference>
<dbReference type="InterPro" id="IPR018234">
    <property type="entry name" value="GTP_CycHdrlase_I_CS"/>
</dbReference>
<dbReference type="InterPro" id="IPR020602">
    <property type="entry name" value="GTP_CycHdrlase_I_dom"/>
</dbReference>
<dbReference type="NCBIfam" id="TIGR00063">
    <property type="entry name" value="folE"/>
    <property type="match status" value="1"/>
</dbReference>
<dbReference type="NCBIfam" id="NF006825">
    <property type="entry name" value="PRK09347.1-2"/>
    <property type="match status" value="1"/>
</dbReference>
<dbReference type="NCBIfam" id="NF006826">
    <property type="entry name" value="PRK09347.1-3"/>
    <property type="match status" value="1"/>
</dbReference>
<dbReference type="PANTHER" id="PTHR11109:SF7">
    <property type="entry name" value="GTP CYCLOHYDROLASE 1"/>
    <property type="match status" value="1"/>
</dbReference>
<dbReference type="PANTHER" id="PTHR11109">
    <property type="entry name" value="GTP CYCLOHYDROLASE I"/>
    <property type="match status" value="1"/>
</dbReference>
<dbReference type="Pfam" id="PF01227">
    <property type="entry name" value="GTP_cyclohydroI"/>
    <property type="match status" value="1"/>
</dbReference>
<dbReference type="SUPFAM" id="SSF55620">
    <property type="entry name" value="Tetrahydrobiopterin biosynthesis enzymes-like"/>
    <property type="match status" value="1"/>
</dbReference>
<dbReference type="PROSITE" id="PS00859">
    <property type="entry name" value="GTP_CYCLOHYDROL_1_1"/>
    <property type="match status" value="1"/>
</dbReference>
<dbReference type="PROSITE" id="PS00860">
    <property type="entry name" value="GTP_CYCLOHYDROL_1_2"/>
    <property type="match status" value="1"/>
</dbReference>
<accession>B4U640</accession>
<comment type="catalytic activity">
    <reaction evidence="1">
        <text>GTP + H2O = 7,8-dihydroneopterin 3'-triphosphate + formate + H(+)</text>
        <dbReference type="Rhea" id="RHEA:17473"/>
        <dbReference type="ChEBI" id="CHEBI:15377"/>
        <dbReference type="ChEBI" id="CHEBI:15378"/>
        <dbReference type="ChEBI" id="CHEBI:15740"/>
        <dbReference type="ChEBI" id="CHEBI:37565"/>
        <dbReference type="ChEBI" id="CHEBI:58462"/>
        <dbReference type="EC" id="3.5.4.16"/>
    </reaction>
</comment>
<comment type="pathway">
    <text evidence="1">Cofactor biosynthesis; 7,8-dihydroneopterin triphosphate biosynthesis; 7,8-dihydroneopterin triphosphate from GTP: step 1/1.</text>
</comment>
<comment type="subunit">
    <text evidence="1">Homomer.</text>
</comment>
<comment type="similarity">
    <text evidence="1">Belongs to the GTP cyclohydrolase I family.</text>
</comment>
<sequence length="182" mass="21132">MIDKEKIIEGIKLFLEGIGEDITREGIKETPERVAKMWEEFEKERSFDFKLFEEYSNYSEMIIVKDIPFYSMCEHHLLPFFGKAHIAYIPNKKICGLSKLVRTVRAMALKPQVQERLTEEIADIVQKELEPMGVGVVIEAEHLCMSMRGVRSPGHCTVTSSLRGNFLSDIRTKEEFFKLIRQ</sequence>
<protein>
    <recommendedName>
        <fullName evidence="1">GTP cyclohydrolase 1</fullName>
        <ecNumber evidence="1">3.5.4.16</ecNumber>
    </recommendedName>
    <alternativeName>
        <fullName evidence="1">GTP cyclohydrolase I</fullName>
        <shortName evidence="1">GTP-CH-I</shortName>
    </alternativeName>
</protein>
<keyword id="KW-0342">GTP-binding</keyword>
<keyword id="KW-0378">Hydrolase</keyword>
<keyword id="KW-0479">Metal-binding</keyword>
<keyword id="KW-0547">Nucleotide-binding</keyword>
<keyword id="KW-0554">One-carbon metabolism</keyword>
<keyword id="KW-0862">Zinc</keyword>